<gene>
    <name evidence="5" type="primary">Fem1a</name>
</gene>
<protein>
    <recommendedName>
        <fullName evidence="4">Protein fem-1 homolog A</fullName>
        <shortName evidence="4">FEM1a</shortName>
    </recommendedName>
    <alternativeName>
        <fullName evidence="4">FEM1-alpha</fullName>
    </alternativeName>
</protein>
<name>FEM1A_RAT</name>
<organism>
    <name type="scientific">Rattus norvegicus</name>
    <name type="common">Rat</name>
    <dbReference type="NCBI Taxonomy" id="10116"/>
    <lineage>
        <taxon>Eukaryota</taxon>
        <taxon>Metazoa</taxon>
        <taxon>Chordata</taxon>
        <taxon>Craniata</taxon>
        <taxon>Vertebrata</taxon>
        <taxon>Euteleostomi</taxon>
        <taxon>Mammalia</taxon>
        <taxon>Eutheria</taxon>
        <taxon>Euarchontoglires</taxon>
        <taxon>Glires</taxon>
        <taxon>Rodentia</taxon>
        <taxon>Myomorpha</taxon>
        <taxon>Muroidea</taxon>
        <taxon>Muridae</taxon>
        <taxon>Murinae</taxon>
        <taxon>Rattus</taxon>
    </lineage>
</organism>
<reference key="1">
    <citation type="journal article" date="2004" name="Genome Res.">
        <title>The status, quality, and expansion of the NIH full-length cDNA project: the Mammalian Gene Collection (MGC).</title>
        <authorList>
            <consortium name="The MGC Project Team"/>
        </authorList>
    </citation>
    <scope>NUCLEOTIDE SEQUENCE [LARGE SCALE MRNA]</scope>
    <source>
        <tissue>Placenta</tissue>
    </source>
</reference>
<evidence type="ECO:0000250" key="1">
    <source>
        <dbReference type="UniProtKB" id="Q9BSK4"/>
    </source>
</evidence>
<evidence type="ECO:0000250" key="2">
    <source>
        <dbReference type="UniProtKB" id="Q9Z2G1"/>
    </source>
</evidence>
<evidence type="ECO:0000256" key="3">
    <source>
        <dbReference type="SAM" id="MobiDB-lite"/>
    </source>
</evidence>
<evidence type="ECO:0000305" key="4"/>
<evidence type="ECO:0000312" key="5">
    <source>
        <dbReference type="RGD" id="1561112"/>
    </source>
</evidence>
<comment type="function">
    <text evidence="1 2">Substrate-recognition component of a Cul2-RING (CRL2) E3 ubiquitin-protein ligase complex of the DesCEND (destruction via C-end degrons) pathway, which recognizes a C-degron located at the extreme C terminus of target proteins, leading to their ubiquitination and degradation. The C-degron recognized by the DesCEND pathway is usually a motif of less than ten residues and can be present in full-length proteins, truncated proteins or proteolytically cleaved forms. The CRL2(FEM1A) complex specifically recognizes proteins with an arginine at the C-terminus: recognizes and binds proteins ending with -Lys/Arg-Xaa-Arg and -Lys/Arg-Xaa-Xaa-Arg C-degrons, such as SIL1 or OR51B2, leading to their ubiquitination and degradation (By similarity). Involved in PGE2-EP4-mediated inhibition of inflammation of macrophages via interaction with NFKB1 and PTGER4. Promotes inflammation in brain microglia through MAP2K4/MKK4-mediated signaling (By similarity).</text>
</comment>
<comment type="pathway">
    <text evidence="1">Protein modification; protein ubiquitination.</text>
</comment>
<comment type="subunit">
    <text evidence="1 2">Component of a CRL2 E3 ubiquitin-protein ligase complex, also named ECS (Elongin BC-CUL2/5-SOCS-box protein) complex, composed of CUL2, Elongin BC (ELOB and ELOC), RBX1 and substrate-specific adapter FEM1A. Interacts with PTGER4 (By similarity). Interacts with NFKB1; the interaction is direct (By similarity).</text>
</comment>
<comment type="subcellular location">
    <subcellularLocation>
        <location evidence="1">Mitochondrion</location>
    </subcellularLocation>
    <subcellularLocation>
        <location evidence="1">Cytoplasm</location>
    </subcellularLocation>
</comment>
<comment type="PTM">
    <text evidence="2">Phosphorylated; highly phosphorylated in myoblasts and myotubes. Phosphorylation at Ser-108 and Ser-608 promote PGE2-EP4-mediated inhibition of inflammation. Dephosphorylated by protein phosphatase 2A (PP2A).</text>
</comment>
<comment type="similarity">
    <text evidence="4">Belongs to the fem-1 family.</text>
</comment>
<sequence>MDLHTAVYNAAHDGKLLLLQKLLAGRGREEIEELLGEVAGGGTPLLIAARRGHLDVVEYLVDNCGASVEASGSVHFDGETIEGAPPLWAASAAGHLAVVRSLLRRGASVNRTTRTNSTPLRAACFDGHLDVVRYLVGEHKADLEVANRHGHTCLMISCYKGHREIARYLLERGAQVNRRSAKGNTALHDCAESGSLEILQLLLGCHARMERDGYGMTPLLAASVTGHTNIVEYLIQEQPGHGQLSGTELPGEGSSQMAGNHCSTPEEAEPYESCCPTSREAAVEALELLGATYVDKKRDLLGALKHWRRAMELRHQGGDYLPKPEPQQLVLAYDYSREVSTPQELEALITDPDEMRMQALLIRERILGPSHPDTSYYIRYRGAVYADSGNFERCIRLWKYALDMQQNNLEPLSPMTASSFLSFAELFSYVLQDRSAKGNLGMQLGFADLMGVLSKGVREVERALQLPKEPGDSAQFTKAIAIILHLLYLLEKVECTPSQEHLKHQTVYRLLKCAPRGKNGFTPLHMAVDKETTNVGRYRVGIFPSLQVVKVLLDCGADPDSRDFDNNTPLHVAAQNNCPAIMDALIEAGAHMDATNAFKKTAYELLDSKLLAKSTMQPFNYVTLQCLAARALDRNKVPYKGFIPEELEAFIQLH</sequence>
<dbReference type="EMBL" id="BC097490">
    <property type="protein sequence ID" value="AAH97490.1"/>
    <property type="molecule type" value="mRNA"/>
</dbReference>
<dbReference type="RefSeq" id="NP_001020877.1">
    <property type="nucleotide sequence ID" value="NM_001025706.1"/>
</dbReference>
<dbReference type="SMR" id="Q4V890"/>
<dbReference type="FunCoup" id="Q4V890">
    <property type="interactions" value="1044"/>
</dbReference>
<dbReference type="STRING" id="10116.ENSRNOP00000067295"/>
<dbReference type="iPTMnet" id="Q4V890"/>
<dbReference type="PhosphoSitePlus" id="Q4V890"/>
<dbReference type="jPOST" id="Q4V890"/>
<dbReference type="PaxDb" id="10116-ENSRNOP00000067295"/>
<dbReference type="Ensembl" id="ENSRNOT00000099590.1">
    <property type="protein sequence ID" value="ENSRNOP00000091315.1"/>
    <property type="gene ID" value="ENSRNOG00000066151.1"/>
</dbReference>
<dbReference type="GeneID" id="316131"/>
<dbReference type="KEGG" id="rno:316131"/>
<dbReference type="AGR" id="RGD:1561112"/>
<dbReference type="CTD" id="55527"/>
<dbReference type="RGD" id="1561112">
    <property type="gene designation" value="Fem1a"/>
</dbReference>
<dbReference type="eggNOG" id="KOG0508">
    <property type="taxonomic scope" value="Eukaryota"/>
</dbReference>
<dbReference type="GeneTree" id="ENSGT00940000161210"/>
<dbReference type="HOGENOM" id="CLU_020042_2_0_1"/>
<dbReference type="InParanoid" id="Q4V890"/>
<dbReference type="OMA" id="EQSSGHP"/>
<dbReference type="OrthoDB" id="4429489at2759"/>
<dbReference type="PhylomeDB" id="Q4V890"/>
<dbReference type="Reactome" id="R-RNO-8951664">
    <property type="pathway name" value="Neddylation"/>
</dbReference>
<dbReference type="UniPathway" id="UPA00143"/>
<dbReference type="PRO" id="PR:Q4V890"/>
<dbReference type="Proteomes" id="UP000002494">
    <property type="component" value="Chromosome 9"/>
</dbReference>
<dbReference type="Bgee" id="ENSRNOG00000050646">
    <property type="expression patterns" value="Expressed in skeletal muscle tissue and 19 other cell types or tissues"/>
</dbReference>
<dbReference type="GO" id="GO:0031462">
    <property type="term" value="C:Cul2-RING ubiquitin ligase complex"/>
    <property type="evidence" value="ECO:0000250"/>
    <property type="project" value="UniProtKB"/>
</dbReference>
<dbReference type="GO" id="GO:0005737">
    <property type="term" value="C:cytoplasm"/>
    <property type="evidence" value="ECO:0000266"/>
    <property type="project" value="RGD"/>
</dbReference>
<dbReference type="GO" id="GO:0005739">
    <property type="term" value="C:mitochondrion"/>
    <property type="evidence" value="ECO:0000250"/>
    <property type="project" value="UniProtKB"/>
</dbReference>
<dbReference type="GO" id="GO:0000151">
    <property type="term" value="C:ubiquitin ligase complex"/>
    <property type="evidence" value="ECO:0000318"/>
    <property type="project" value="GO_Central"/>
</dbReference>
<dbReference type="GO" id="GO:0031867">
    <property type="term" value="F:EP4 subtype prostaglandin E2 receptor binding"/>
    <property type="evidence" value="ECO:0000266"/>
    <property type="project" value="RGD"/>
</dbReference>
<dbReference type="GO" id="GO:0060090">
    <property type="term" value="F:molecular adaptor activity"/>
    <property type="evidence" value="ECO:0000266"/>
    <property type="project" value="RGD"/>
</dbReference>
<dbReference type="GO" id="GO:1990756">
    <property type="term" value="F:ubiquitin-like ligase-substrate adaptor activity"/>
    <property type="evidence" value="ECO:0000250"/>
    <property type="project" value="UniProtKB"/>
</dbReference>
<dbReference type="GO" id="GO:0050728">
    <property type="term" value="P:negative regulation of inflammatory response"/>
    <property type="evidence" value="ECO:0000266"/>
    <property type="project" value="RGD"/>
</dbReference>
<dbReference type="GO" id="GO:0050729">
    <property type="term" value="P:positive regulation of inflammatory response"/>
    <property type="evidence" value="ECO:0000250"/>
    <property type="project" value="UniProtKB"/>
</dbReference>
<dbReference type="GO" id="GO:0043161">
    <property type="term" value="P:proteasome-mediated ubiquitin-dependent protein catabolic process"/>
    <property type="evidence" value="ECO:0000318"/>
    <property type="project" value="GO_Central"/>
</dbReference>
<dbReference type="GO" id="GO:0016567">
    <property type="term" value="P:protein ubiquitination"/>
    <property type="evidence" value="ECO:0007669"/>
    <property type="project" value="UniProtKB-UniPathway"/>
</dbReference>
<dbReference type="GO" id="GO:0051438">
    <property type="term" value="P:regulation of ubiquitin-protein transferase activity"/>
    <property type="evidence" value="ECO:0000250"/>
    <property type="project" value="UniProtKB"/>
</dbReference>
<dbReference type="GO" id="GO:0140627">
    <property type="term" value="P:ubiquitin-dependent protein catabolic process via the C-end degron rule pathway"/>
    <property type="evidence" value="ECO:0000250"/>
    <property type="project" value="UniProtKB"/>
</dbReference>
<dbReference type="FunFam" id="1.25.40.20:FF:000076">
    <property type="entry name" value="Fem-1 homolog c (C.elegans)"/>
    <property type="match status" value="1"/>
</dbReference>
<dbReference type="FunFam" id="1.25.40.10:FF:000261">
    <property type="entry name" value="protein fem-1 homolog A"/>
    <property type="match status" value="1"/>
</dbReference>
<dbReference type="FunFam" id="1.25.40.20:FF:000133">
    <property type="entry name" value="protein fem-1 homolog A"/>
    <property type="match status" value="1"/>
</dbReference>
<dbReference type="FunFam" id="1.25.40.20:FF:000209">
    <property type="entry name" value="protein fem-1 homolog A"/>
    <property type="match status" value="1"/>
</dbReference>
<dbReference type="Gene3D" id="1.25.40.20">
    <property type="entry name" value="Ankyrin repeat-containing domain"/>
    <property type="match status" value="3"/>
</dbReference>
<dbReference type="Gene3D" id="1.25.40.10">
    <property type="entry name" value="Tetratricopeptide repeat domain"/>
    <property type="match status" value="1"/>
</dbReference>
<dbReference type="InterPro" id="IPR002110">
    <property type="entry name" value="Ankyrin_rpt"/>
</dbReference>
<dbReference type="InterPro" id="IPR036770">
    <property type="entry name" value="Ankyrin_rpt-contain_sf"/>
</dbReference>
<dbReference type="InterPro" id="IPR011990">
    <property type="entry name" value="TPR-like_helical_dom_sf"/>
</dbReference>
<dbReference type="PANTHER" id="PTHR24173">
    <property type="entry name" value="ANKYRIN REPEAT CONTAINING"/>
    <property type="match status" value="1"/>
</dbReference>
<dbReference type="PANTHER" id="PTHR24173:SF74">
    <property type="entry name" value="ANKYRIN REPEAT DOMAIN-CONTAINING PROTEIN 16"/>
    <property type="match status" value="1"/>
</dbReference>
<dbReference type="Pfam" id="PF00023">
    <property type="entry name" value="Ank"/>
    <property type="match status" value="1"/>
</dbReference>
<dbReference type="Pfam" id="PF12796">
    <property type="entry name" value="Ank_2"/>
    <property type="match status" value="3"/>
</dbReference>
<dbReference type="PRINTS" id="PR01415">
    <property type="entry name" value="ANKYRIN"/>
</dbReference>
<dbReference type="SMART" id="SM00248">
    <property type="entry name" value="ANK"/>
    <property type="match status" value="9"/>
</dbReference>
<dbReference type="SUPFAM" id="SSF48403">
    <property type="entry name" value="Ankyrin repeat"/>
    <property type="match status" value="2"/>
</dbReference>
<dbReference type="SUPFAM" id="SSF48452">
    <property type="entry name" value="TPR-like"/>
    <property type="match status" value="1"/>
</dbReference>
<dbReference type="PROSITE" id="PS50297">
    <property type="entry name" value="ANK_REP_REGION"/>
    <property type="match status" value="2"/>
</dbReference>
<dbReference type="PROSITE" id="PS50088">
    <property type="entry name" value="ANK_REPEAT"/>
    <property type="match status" value="7"/>
</dbReference>
<proteinExistence type="evidence at transcript level"/>
<keyword id="KW-0040">ANK repeat</keyword>
<keyword id="KW-0963">Cytoplasm</keyword>
<keyword id="KW-0496">Mitochondrion</keyword>
<keyword id="KW-0597">Phosphoprotein</keyword>
<keyword id="KW-1185">Reference proteome</keyword>
<keyword id="KW-0677">Repeat</keyword>
<keyword id="KW-0802">TPR repeat</keyword>
<keyword id="KW-0833">Ubl conjugation pathway</keyword>
<accession>Q4V890</accession>
<feature type="chain" id="PRO_0000324528" description="Protein fem-1 homolog A">
    <location>
        <begin position="1"/>
        <end position="654"/>
    </location>
</feature>
<feature type="repeat" description="ANK 1">
    <location>
        <begin position="2"/>
        <end position="31"/>
    </location>
</feature>
<feature type="repeat" description="ANK 2">
    <location>
        <begin position="40"/>
        <end position="70"/>
    </location>
</feature>
<feature type="repeat" description="ANK 3">
    <location>
        <begin position="82"/>
        <end position="111"/>
    </location>
</feature>
<feature type="repeat" description="ANK 4">
    <location>
        <begin position="115"/>
        <end position="145"/>
    </location>
</feature>
<feature type="repeat" description="ANK 5">
    <location>
        <begin position="149"/>
        <end position="178"/>
    </location>
</feature>
<feature type="repeat" description="ANK 6">
    <location>
        <begin position="182"/>
        <end position="211"/>
    </location>
</feature>
<feature type="repeat" description="ANK 7">
    <location>
        <begin position="214"/>
        <end position="243"/>
    </location>
</feature>
<feature type="repeat" description="TPR 1">
    <location>
        <begin position="283"/>
        <end position="317"/>
    </location>
</feature>
<feature type="repeat" description="TPR 2">
    <location>
        <begin position="375"/>
        <end position="408"/>
    </location>
</feature>
<feature type="repeat" description="ANK 8">
    <location>
        <begin position="519"/>
        <end position="561"/>
    </location>
</feature>
<feature type="repeat" description="ANK 9">
    <location>
        <begin position="565"/>
        <end position="594"/>
    </location>
</feature>
<feature type="region of interest" description="Disordered" evidence="3">
    <location>
        <begin position="241"/>
        <end position="265"/>
    </location>
</feature>
<feature type="compositionally biased region" description="Polar residues" evidence="3">
    <location>
        <begin position="253"/>
        <end position="263"/>
    </location>
</feature>
<feature type="modified residue" description="Phosphoserine" evidence="2">
    <location>
        <position position="108"/>
    </location>
</feature>
<feature type="modified residue" description="Phosphoserine" evidence="2">
    <location>
        <position position="608"/>
    </location>
</feature>